<dbReference type="EC" id="6.3.2.49" evidence="4 5 6 7"/>
<dbReference type="EMBL" id="X73124">
    <property type="protein sequence ID" value="CAA51639.1"/>
    <property type="molecule type" value="Genomic_DNA"/>
</dbReference>
<dbReference type="EMBL" id="AL009126">
    <property type="protein sequence ID" value="CAB15798.1"/>
    <property type="molecule type" value="Genomic_DNA"/>
</dbReference>
<dbReference type="PIR" id="S39738">
    <property type="entry name" value="S39738"/>
</dbReference>
<dbReference type="RefSeq" id="NP_391651.1">
    <property type="nucleotide sequence ID" value="NC_000964.3"/>
</dbReference>
<dbReference type="RefSeq" id="WP_003242921.1">
    <property type="nucleotide sequence ID" value="NZ_OZ025638.1"/>
</dbReference>
<dbReference type="PDB" id="3VMM">
    <property type="method" value="X-ray"/>
    <property type="resolution" value="2.50 A"/>
    <property type="chains" value="A=1-472"/>
</dbReference>
<dbReference type="PDB" id="3WNZ">
    <property type="method" value="X-ray"/>
    <property type="resolution" value="1.90 A"/>
    <property type="chains" value="A=4-468"/>
</dbReference>
<dbReference type="PDB" id="3WO0">
    <property type="method" value="X-ray"/>
    <property type="resolution" value="2.00 A"/>
    <property type="chains" value="A=4-468"/>
</dbReference>
<dbReference type="PDB" id="3WO1">
    <property type="method" value="X-ray"/>
    <property type="resolution" value="2.30 A"/>
    <property type="chains" value="A=4-468"/>
</dbReference>
<dbReference type="PDBsum" id="3VMM"/>
<dbReference type="PDBsum" id="3WNZ"/>
<dbReference type="PDBsum" id="3WO0"/>
<dbReference type="PDBsum" id="3WO1"/>
<dbReference type="SMR" id="P39641"/>
<dbReference type="FunCoup" id="P39641">
    <property type="interactions" value="11"/>
</dbReference>
<dbReference type="STRING" id="224308.BSU37710"/>
<dbReference type="PaxDb" id="224308-BSU37710"/>
<dbReference type="DNASU" id="937214"/>
<dbReference type="EnsemblBacteria" id="CAB15798">
    <property type="protein sequence ID" value="CAB15798"/>
    <property type="gene ID" value="BSU_37710"/>
</dbReference>
<dbReference type="GeneID" id="937214"/>
<dbReference type="KEGG" id="bsu:BSU37710"/>
<dbReference type="PATRIC" id="fig|224308.179.peg.4083"/>
<dbReference type="eggNOG" id="COG0151">
    <property type="taxonomic scope" value="Bacteria"/>
</dbReference>
<dbReference type="InParanoid" id="P39641"/>
<dbReference type="OrthoDB" id="9803907at2"/>
<dbReference type="PhylomeDB" id="P39641"/>
<dbReference type="BioCyc" id="BSUB:BSU37710-MONOMER"/>
<dbReference type="BioCyc" id="MetaCyc:MONOMER-19123"/>
<dbReference type="BRENDA" id="6.3.2.49">
    <property type="organism ID" value="658"/>
</dbReference>
<dbReference type="SABIO-RK" id="P39641"/>
<dbReference type="UniPathway" id="UPA00100"/>
<dbReference type="EvolutionaryTrace" id="P39641"/>
<dbReference type="Proteomes" id="UP000001570">
    <property type="component" value="Chromosome"/>
</dbReference>
<dbReference type="GO" id="GO:0005524">
    <property type="term" value="F:ATP binding"/>
    <property type="evidence" value="ECO:0007669"/>
    <property type="project" value="UniProtKB-KW"/>
</dbReference>
<dbReference type="GO" id="GO:0034026">
    <property type="term" value="F:L-amino-acid alpha-ligase activity"/>
    <property type="evidence" value="ECO:0007669"/>
    <property type="project" value="UniProtKB-EC"/>
</dbReference>
<dbReference type="GO" id="GO:0046872">
    <property type="term" value="F:metal ion binding"/>
    <property type="evidence" value="ECO:0007669"/>
    <property type="project" value="UniProtKB-KW"/>
</dbReference>
<dbReference type="GO" id="GO:0017000">
    <property type="term" value="P:antibiotic biosynthetic process"/>
    <property type="evidence" value="ECO:0007669"/>
    <property type="project" value="UniProtKB-KW"/>
</dbReference>
<dbReference type="Gene3D" id="3.40.50.20">
    <property type="match status" value="1"/>
</dbReference>
<dbReference type="Gene3D" id="3.90.1170.60">
    <property type="match status" value="1"/>
</dbReference>
<dbReference type="Gene3D" id="3.30.1490.20">
    <property type="entry name" value="ATP-grasp fold, A domain"/>
    <property type="match status" value="1"/>
</dbReference>
<dbReference type="Gene3D" id="3.30.470.20">
    <property type="entry name" value="ATP-grasp fold, B domain"/>
    <property type="match status" value="1"/>
</dbReference>
<dbReference type="InterPro" id="IPR052032">
    <property type="entry name" value="ATP-dep_AA_Ligase"/>
</dbReference>
<dbReference type="InterPro" id="IPR011761">
    <property type="entry name" value="ATP-grasp"/>
</dbReference>
<dbReference type="InterPro" id="IPR013815">
    <property type="entry name" value="ATP_grasp_subdomain_1"/>
</dbReference>
<dbReference type="PANTHER" id="PTHR43585:SF2">
    <property type="entry name" value="ATP-GRASP ENZYME FSQD"/>
    <property type="match status" value="1"/>
</dbReference>
<dbReference type="PANTHER" id="PTHR43585">
    <property type="entry name" value="FUMIPYRROLE BIOSYNTHESIS PROTEIN C"/>
    <property type="match status" value="1"/>
</dbReference>
<dbReference type="Pfam" id="PF13535">
    <property type="entry name" value="ATP-grasp_4"/>
    <property type="match status" value="1"/>
</dbReference>
<dbReference type="SUPFAM" id="SSF56059">
    <property type="entry name" value="Glutathione synthetase ATP-binding domain-like"/>
    <property type="match status" value="1"/>
</dbReference>
<dbReference type="PROSITE" id="PS50975">
    <property type="entry name" value="ATP_GRASP"/>
    <property type="match status" value="1"/>
</dbReference>
<feature type="chain" id="PRO_0000064804" description="Alanine--anticapsin ligase">
    <location>
        <begin position="1"/>
        <end position="472"/>
    </location>
</feature>
<feature type="domain" description="ATP-grasp" evidence="1">
    <location>
        <begin position="142"/>
        <end position="355"/>
    </location>
</feature>
<feature type="binding site" evidence="5">
    <location>
        <position position="109"/>
    </location>
    <ligand>
        <name>Mg(2+)</name>
        <dbReference type="ChEBI" id="CHEBI:18420"/>
        <label>1</label>
    </ligand>
</feature>
<feature type="binding site" evidence="5 7">
    <location>
        <position position="138"/>
    </location>
    <ligand>
        <name>ATP</name>
        <dbReference type="ChEBI" id="CHEBI:30616"/>
    </ligand>
</feature>
<feature type="binding site" evidence="5 7">
    <location>
        <position position="178"/>
    </location>
    <ligand>
        <name>ATP</name>
        <dbReference type="ChEBI" id="CHEBI:30616"/>
    </ligand>
</feature>
<feature type="binding site" evidence="5">
    <location>
        <position position="182"/>
    </location>
    <ligand>
        <name>Mg(2+)</name>
        <dbReference type="ChEBI" id="CHEBI:18420"/>
        <label>1</label>
    </ligand>
</feature>
<feature type="binding site" evidence="5 7">
    <location>
        <begin position="184"/>
        <end position="185"/>
    </location>
    <ligand>
        <name>ATP</name>
        <dbReference type="ChEBI" id="CHEBI:30616"/>
    </ligand>
</feature>
<feature type="binding site" evidence="5 7">
    <location>
        <begin position="226"/>
        <end position="229"/>
    </location>
    <ligand>
        <name>ATP</name>
        <dbReference type="ChEBI" id="CHEBI:30616"/>
    </ligand>
</feature>
<feature type="binding site" evidence="5 7">
    <location>
        <position position="268"/>
    </location>
    <ligand>
        <name>ATP</name>
        <dbReference type="ChEBI" id="CHEBI:30616"/>
    </ligand>
</feature>
<feature type="binding site" evidence="7">
    <location>
        <position position="273"/>
    </location>
    <ligand>
        <name>substrate</name>
    </ligand>
</feature>
<feature type="binding site" evidence="5 7">
    <location>
        <begin position="309"/>
        <end position="311"/>
    </location>
    <ligand>
        <name>substrate</name>
    </ligand>
</feature>
<feature type="binding site" evidence="5 7">
    <location>
        <position position="311"/>
    </location>
    <ligand>
        <name>Mg(2+)</name>
        <dbReference type="ChEBI" id="CHEBI:18420"/>
        <label>2</label>
    </ligand>
</feature>
<feature type="binding site" evidence="5 7">
    <location>
        <position position="324"/>
    </location>
    <ligand>
        <name>Mg(2+)</name>
        <dbReference type="ChEBI" id="CHEBI:18420"/>
        <label>1</label>
    </ligand>
</feature>
<feature type="binding site" evidence="5 7">
    <location>
        <position position="324"/>
    </location>
    <ligand>
        <name>Mg(2+)</name>
        <dbReference type="ChEBI" id="CHEBI:18420"/>
        <label>2</label>
    </ligand>
</feature>
<feature type="binding site" evidence="5 7">
    <location>
        <begin position="328"/>
        <end position="331"/>
    </location>
    <ligand>
        <name>substrate</name>
    </ligand>
</feature>
<feature type="site" description="Plays a key role in restricting the N-terminal substrate specificity to small amino acids such as L-Ala" evidence="7">
    <location>
        <position position="332"/>
    </location>
</feature>
<feature type="mutagenesis site" description="Almost no effect on catalytic efficiency." evidence="5">
    <original>Y</original>
    <variation>F</variation>
    <location>
        <position position="75"/>
    </location>
</feature>
<feature type="mutagenesis site" description="Loss of ligase activity." evidence="7">
    <original>E</original>
    <variation>A</variation>
    <location>
        <position position="109"/>
    </location>
</feature>
<feature type="mutagenesis site" description="Almost no effect on catalytic efficiency." evidence="5">
    <original>S</original>
    <variation>A</variation>
    <location>
        <position position="184"/>
    </location>
</feature>
<feature type="mutagenesis site" description="Loss of ligase activity." evidence="7">
    <original>E</original>
    <variation>A</variation>
    <location>
        <position position="273"/>
    </location>
</feature>
<feature type="mutagenesis site" description="Loss of ligase activity." evidence="7">
    <original>H</original>
    <variation>R</variation>
    <location>
        <position position="309"/>
    </location>
</feature>
<feature type="mutagenesis site" description="Loss of ligase activity." evidence="7">
    <original>E</original>
    <variation>D</variation>
    <location>
        <position position="311"/>
    </location>
</feature>
<feature type="mutagenesis site" description="Loss of ligase activity." evidence="7">
    <original>R</original>
    <variation>K</variation>
    <location>
        <position position="328"/>
    </location>
</feature>
<feature type="mutagenesis site" description="Hydrolyzes ATP, even in the absence of L-Ala, and the structure appears to show a cavity in the N-terminal substrate-binding pocket. Also alters the substrate specificity and activity depending on the size and shape of substituted amino acids." evidence="7">
    <original>W</original>
    <variation>A</variation>
    <location>
        <position position="332"/>
    </location>
</feature>
<feature type="strand" evidence="14">
    <location>
        <begin position="5"/>
        <end position="9"/>
    </location>
</feature>
<feature type="strand" evidence="14">
    <location>
        <begin position="12"/>
        <end position="15"/>
    </location>
</feature>
<feature type="helix" evidence="14">
    <location>
        <begin position="17"/>
        <end position="27"/>
    </location>
</feature>
<feature type="strand" evidence="14">
    <location>
        <begin position="28"/>
        <end position="35"/>
    </location>
</feature>
<feature type="helix" evidence="14">
    <location>
        <begin position="37"/>
        <end position="39"/>
    </location>
</feature>
<feature type="helix" evidence="14">
    <location>
        <begin position="42"/>
        <end position="51"/>
    </location>
</feature>
<feature type="strand" evidence="14">
    <location>
        <begin position="53"/>
        <end position="57"/>
    </location>
</feature>
<feature type="helix" evidence="14">
    <location>
        <begin position="59"/>
        <end position="61"/>
    </location>
</feature>
<feature type="helix" evidence="14">
    <location>
        <begin position="65"/>
        <end position="68"/>
    </location>
</feature>
<feature type="helix" evidence="14">
    <location>
        <begin position="85"/>
        <end position="99"/>
    </location>
</feature>
<feature type="strand" evidence="14">
    <location>
        <begin position="102"/>
        <end position="107"/>
    </location>
</feature>
<feature type="helix" evidence="14">
    <location>
        <begin position="109"/>
        <end position="111"/>
    </location>
</feature>
<feature type="helix" evidence="14">
    <location>
        <begin position="112"/>
        <end position="122"/>
    </location>
</feature>
<feature type="helix" evidence="14">
    <location>
        <begin position="129"/>
        <end position="134"/>
    </location>
</feature>
<feature type="helix" evidence="14">
    <location>
        <begin position="138"/>
        <end position="147"/>
    </location>
</feature>
<feature type="strand" evidence="14">
    <location>
        <begin position="155"/>
        <end position="158"/>
    </location>
</feature>
<feature type="helix" evidence="14">
    <location>
        <begin position="161"/>
        <end position="171"/>
    </location>
</feature>
<feature type="strand" evidence="14">
    <location>
        <begin position="173"/>
        <end position="181"/>
    </location>
</feature>
<feature type="turn" evidence="14">
    <location>
        <begin position="184"/>
        <end position="187"/>
    </location>
</feature>
<feature type="strand" evidence="14">
    <location>
        <begin position="189"/>
        <end position="191"/>
    </location>
</feature>
<feature type="turn" evidence="14">
    <location>
        <begin position="194"/>
        <end position="196"/>
    </location>
</feature>
<feature type="helix" evidence="14">
    <location>
        <begin position="197"/>
        <end position="208"/>
    </location>
</feature>
<feature type="strand" evidence="14">
    <location>
        <begin position="220"/>
        <end position="227"/>
    </location>
</feature>
<feature type="helix" evidence="14">
    <location>
        <begin position="233"/>
        <end position="236"/>
    </location>
</feature>
<feature type="strand" evidence="14">
    <location>
        <begin position="238"/>
        <end position="242"/>
    </location>
</feature>
<feature type="strand" evidence="14">
    <location>
        <begin position="244"/>
        <end position="253"/>
    </location>
</feature>
<feature type="strand" evidence="14">
    <location>
        <begin position="256"/>
        <end position="265"/>
    </location>
</feature>
<feature type="strand" evidence="14">
    <location>
        <begin position="275"/>
        <end position="279"/>
    </location>
</feature>
<feature type="helix" evidence="14">
    <location>
        <begin position="284"/>
        <end position="301"/>
    </location>
</feature>
<feature type="strand" evidence="14">
    <location>
        <begin position="305"/>
        <end position="315"/>
    </location>
</feature>
<feature type="helix" evidence="14">
    <location>
        <begin position="316"/>
        <end position="318"/>
    </location>
</feature>
<feature type="strand" evidence="14">
    <location>
        <begin position="319"/>
        <end position="328"/>
    </location>
</feature>
<feature type="helix" evidence="14">
    <location>
        <begin position="334"/>
        <end position="342"/>
    </location>
</feature>
<feature type="helix" evidence="14">
    <location>
        <begin position="346"/>
        <end position="356"/>
    </location>
</feature>
<feature type="helix" evidence="14">
    <location>
        <begin position="357"/>
        <end position="359"/>
    </location>
</feature>
<feature type="strand" evidence="14">
    <location>
        <begin position="364"/>
        <end position="366"/>
    </location>
</feature>
<feature type="strand" evidence="14">
    <location>
        <begin position="371"/>
        <end position="379"/>
    </location>
</feature>
<feature type="helix" evidence="14">
    <location>
        <begin position="381"/>
        <end position="386"/>
    </location>
</feature>
<feature type="strand" evidence="14">
    <location>
        <begin position="395"/>
        <end position="403"/>
    </location>
</feature>
<feature type="strand" evidence="14">
    <location>
        <begin position="414"/>
        <end position="420"/>
    </location>
</feature>
<feature type="strand" evidence="14">
    <location>
        <begin position="426"/>
        <end position="431"/>
    </location>
</feature>
<feature type="helix" evidence="14">
    <location>
        <begin position="433"/>
        <end position="435"/>
    </location>
</feature>
<feature type="strand" evidence="14">
    <location>
        <begin position="439"/>
        <end position="446"/>
    </location>
</feature>
<feature type="helix" evidence="14">
    <location>
        <begin position="448"/>
        <end position="461"/>
    </location>
</feature>
<feature type="strand" evidence="14">
    <location>
        <begin position="463"/>
        <end position="467"/>
    </location>
</feature>
<proteinExistence type="evidence at protein level"/>
<sequence>MERKTVLVIADLGGCPPHMFYKSAAEKYNLVSFIPRPFAITASHAALIEKYSVAVIKDKDYFKSLADFEHPDSIYWAHEDHNKPEEEVVEQIVKVAEMFGADAITTNNELFIAPMAKACERLGLRGAGVQAAENARDKNKMRDAFNKAGVKSIKNKRVTTLEDFRAALEEIGTPLILKPTYLASSIGVTLITDTETAEDEFNRVNDYLKSINVPKAVTFEAPFIAEEFLQGEYGDWYQTEGYSDYISIEGIMADGEYFPIAIHDKTPQIGFTETSHITPSILDEEAKKKIVEAAKKANEGLGLQNCATHTEIKLMKNREPGLIESAARFAGWNMIPNIKKVFGLDMAQLLLDVLCFGKDADLPDGLLDQEPYYVADCHLYPQHFKQNGQIPETAEDLVIEAIDIPDGLLKGDTEIVSFSAAAPGTSVDLTLFEAFNSIAAFELKGSNSQDVAESIRQIQQHAKLTAKYVLPV</sequence>
<protein>
    <recommendedName>
        <fullName evidence="12">Alanine--anticapsin ligase</fullName>
        <ecNumber evidence="4 5 6 7">6.3.2.49</ecNumber>
    </recommendedName>
    <alternativeName>
        <fullName evidence="11">ATP-dependent dipeptide ligase</fullName>
    </alternativeName>
    <alternativeName>
        <fullName evidence="8">Bacilysin synthetase</fullName>
    </alternativeName>
    <alternativeName>
        <fullName evidence="12">L-Ala-L-amino acid dipeptide ligase</fullName>
    </alternativeName>
    <alternativeName>
        <fullName evidence="12">L-alanine--L-anticapsin ligase</fullName>
    </alternativeName>
    <alternativeName>
        <fullName evidence="10">L-amino acid ligase</fullName>
        <shortName evidence="10">Lal</shortName>
    </alternativeName>
</protein>
<name>BACD_BACSU</name>
<gene>
    <name evidence="9" type="primary">bacD</name>
    <name evidence="10" type="synonym">ywfE</name>
    <name type="ordered locus">BSU37710</name>
    <name type="ORF">ipa-83d</name>
</gene>
<accession>P39641</accession>
<keyword id="KW-0002">3D-structure</keyword>
<keyword id="KW-0045">Antibiotic biosynthesis</keyword>
<keyword id="KW-0067">ATP-binding</keyword>
<keyword id="KW-0436">Ligase</keyword>
<keyword id="KW-0460">Magnesium</keyword>
<keyword id="KW-0479">Metal-binding</keyword>
<keyword id="KW-0547">Nucleotide-binding</keyword>
<keyword id="KW-1185">Reference proteome</keyword>
<reference key="1">
    <citation type="journal article" date="1993" name="Mol. Microbiol.">
        <title>Bacillus subtilis genome project: cloning and sequencing of the 97 kb region from 325 degrees to 333 degrees.</title>
        <authorList>
            <person name="Glaser P."/>
            <person name="Kunst F."/>
            <person name="Arnaud M."/>
            <person name="Coudart M.P."/>
            <person name="Gonzales W."/>
            <person name="Hullo M.-F."/>
            <person name="Ionescu M."/>
            <person name="Lubochinsky B."/>
            <person name="Marcelino L."/>
            <person name="Moszer I."/>
            <person name="Presecan E."/>
            <person name="Santana M."/>
            <person name="Schneider E."/>
            <person name="Schweizer J."/>
            <person name="Vertes A."/>
            <person name="Rapoport G."/>
            <person name="Danchin A."/>
        </authorList>
    </citation>
    <scope>NUCLEOTIDE SEQUENCE [GENOMIC DNA]</scope>
    <source>
        <strain>168</strain>
    </source>
</reference>
<reference key="2">
    <citation type="journal article" date="1997" name="Nature">
        <title>The complete genome sequence of the Gram-positive bacterium Bacillus subtilis.</title>
        <authorList>
            <person name="Kunst F."/>
            <person name="Ogasawara N."/>
            <person name="Moszer I."/>
            <person name="Albertini A.M."/>
            <person name="Alloni G."/>
            <person name="Azevedo V."/>
            <person name="Bertero M.G."/>
            <person name="Bessieres P."/>
            <person name="Bolotin A."/>
            <person name="Borchert S."/>
            <person name="Borriss R."/>
            <person name="Boursier L."/>
            <person name="Brans A."/>
            <person name="Braun M."/>
            <person name="Brignell S.C."/>
            <person name="Bron S."/>
            <person name="Brouillet S."/>
            <person name="Bruschi C.V."/>
            <person name="Caldwell B."/>
            <person name="Capuano V."/>
            <person name="Carter N.M."/>
            <person name="Choi S.-K."/>
            <person name="Codani J.-J."/>
            <person name="Connerton I.F."/>
            <person name="Cummings N.J."/>
            <person name="Daniel R.A."/>
            <person name="Denizot F."/>
            <person name="Devine K.M."/>
            <person name="Duesterhoeft A."/>
            <person name="Ehrlich S.D."/>
            <person name="Emmerson P.T."/>
            <person name="Entian K.-D."/>
            <person name="Errington J."/>
            <person name="Fabret C."/>
            <person name="Ferrari E."/>
            <person name="Foulger D."/>
            <person name="Fritz C."/>
            <person name="Fujita M."/>
            <person name="Fujita Y."/>
            <person name="Fuma S."/>
            <person name="Galizzi A."/>
            <person name="Galleron N."/>
            <person name="Ghim S.-Y."/>
            <person name="Glaser P."/>
            <person name="Goffeau A."/>
            <person name="Golightly E.J."/>
            <person name="Grandi G."/>
            <person name="Guiseppi G."/>
            <person name="Guy B.J."/>
            <person name="Haga K."/>
            <person name="Haiech J."/>
            <person name="Harwood C.R."/>
            <person name="Henaut A."/>
            <person name="Hilbert H."/>
            <person name="Holsappel S."/>
            <person name="Hosono S."/>
            <person name="Hullo M.-F."/>
            <person name="Itaya M."/>
            <person name="Jones L.-M."/>
            <person name="Joris B."/>
            <person name="Karamata D."/>
            <person name="Kasahara Y."/>
            <person name="Klaerr-Blanchard M."/>
            <person name="Klein C."/>
            <person name="Kobayashi Y."/>
            <person name="Koetter P."/>
            <person name="Koningstein G."/>
            <person name="Krogh S."/>
            <person name="Kumano M."/>
            <person name="Kurita K."/>
            <person name="Lapidus A."/>
            <person name="Lardinois S."/>
            <person name="Lauber J."/>
            <person name="Lazarevic V."/>
            <person name="Lee S.-M."/>
            <person name="Levine A."/>
            <person name="Liu H."/>
            <person name="Masuda S."/>
            <person name="Mauel C."/>
            <person name="Medigue C."/>
            <person name="Medina N."/>
            <person name="Mellado R.P."/>
            <person name="Mizuno M."/>
            <person name="Moestl D."/>
            <person name="Nakai S."/>
            <person name="Noback M."/>
            <person name="Noone D."/>
            <person name="O'Reilly M."/>
            <person name="Ogawa K."/>
            <person name="Ogiwara A."/>
            <person name="Oudega B."/>
            <person name="Park S.-H."/>
            <person name="Parro V."/>
            <person name="Pohl T.M."/>
            <person name="Portetelle D."/>
            <person name="Porwollik S."/>
            <person name="Prescott A.M."/>
            <person name="Presecan E."/>
            <person name="Pujic P."/>
            <person name="Purnelle B."/>
            <person name="Rapoport G."/>
            <person name="Rey M."/>
            <person name="Reynolds S."/>
            <person name="Rieger M."/>
            <person name="Rivolta C."/>
            <person name="Rocha E."/>
            <person name="Roche B."/>
            <person name="Rose M."/>
            <person name="Sadaie Y."/>
            <person name="Sato T."/>
            <person name="Scanlan E."/>
            <person name="Schleich S."/>
            <person name="Schroeter R."/>
            <person name="Scoffone F."/>
            <person name="Sekiguchi J."/>
            <person name="Sekowska A."/>
            <person name="Seror S.J."/>
            <person name="Serror P."/>
            <person name="Shin B.-S."/>
            <person name="Soldo B."/>
            <person name="Sorokin A."/>
            <person name="Tacconi E."/>
            <person name="Takagi T."/>
            <person name="Takahashi H."/>
            <person name="Takemaru K."/>
            <person name="Takeuchi M."/>
            <person name="Tamakoshi A."/>
            <person name="Tanaka T."/>
            <person name="Terpstra P."/>
            <person name="Tognoni A."/>
            <person name="Tosato V."/>
            <person name="Uchiyama S."/>
            <person name="Vandenbol M."/>
            <person name="Vannier F."/>
            <person name="Vassarotti A."/>
            <person name="Viari A."/>
            <person name="Wambutt R."/>
            <person name="Wedler E."/>
            <person name="Wedler H."/>
            <person name="Weitzenegger T."/>
            <person name="Winters P."/>
            <person name="Wipat A."/>
            <person name="Yamamoto H."/>
            <person name="Yamane K."/>
            <person name="Yasumoto K."/>
            <person name="Yata K."/>
            <person name="Yoshida K."/>
            <person name="Yoshikawa H.-F."/>
            <person name="Zumstein E."/>
            <person name="Yoshikawa H."/>
            <person name="Danchin A."/>
        </authorList>
    </citation>
    <scope>NUCLEOTIDE SEQUENCE [LARGE SCALE GENOMIC DNA]</scope>
    <source>
        <strain>168</strain>
    </source>
</reference>
<reference key="3">
    <citation type="journal article" date="2003" name="J. Biol. Chem.">
        <title>Guanine nucleotides guanosine 5'-diphosphate 3'-diphosphate and GTP co-operatively regulate the production of an antibiotic bacilysin in Bacillus subtilis.</title>
        <authorList>
            <person name="Inaoka T."/>
            <person name="Takahashi K."/>
            <person name="Ohnishi-Kameyama M."/>
            <person name="Yoshida M."/>
            <person name="Ochi K."/>
        </authorList>
    </citation>
    <scope>INDUCTION</scope>
    <source>
        <strain>168 / 61884</strain>
    </source>
</reference>
<reference key="4">
    <citation type="journal article" date="2005" name="J. Bacteriol.">
        <title>ywfE in Bacillus subtilis codes for a novel enzyme, L-amino acid ligase.</title>
        <authorList>
            <person name="Tabata K."/>
            <person name="Ikeda H."/>
            <person name="Hashimoto S."/>
        </authorList>
    </citation>
    <scope>FUNCTION</scope>
    <scope>CATALYTIC ACTIVITY</scope>
    <scope>SUBSTRATE SPECIFICITY</scope>
    <scope>BIOPHYSICOCHEMICAL PROPERTIES</scope>
    <source>
        <strain>ATCC 15245 / 3349 / IAM 1-3</strain>
    </source>
</reference>
<reference key="5">
    <citation type="journal article" date="2005" name="Arch. Microbiol.">
        <title>bac genes for recombinant bacilysin and anticapsin production in Bacillus host strains.</title>
        <authorList>
            <person name="Steinborn G."/>
            <person name="Hajirezaei M.-R."/>
            <person name="Hofemeister J."/>
        </authorList>
    </citation>
    <scope>FUNCTION IN BACILYSIN PRODUCTION</scope>
    <scope>GENE NAME</scope>
</reference>
<reference key="6">
    <citation type="journal article" date="2013" name="Biochemistry">
        <title>Action and timing of BacC and BacD in the late stages of biosynthesis of the dipeptide antibiotic bacilysin.</title>
        <authorList>
            <person name="Parker J.B."/>
            <person name="Walsh C.T."/>
        </authorList>
    </citation>
    <scope>FUNCTION</scope>
    <scope>CATALYTIC ACTIVITY</scope>
    <scope>PATHWAY</scope>
    <scope>SUBSTRATE SPECIFICITY</scope>
</reference>
<reference key="7">
    <citation type="journal article" date="2012" name="Protein Sci.">
        <title>Structural and enzymatic characterization of BacD, an L-amino acid dipeptide ligase from Bacillus subtilis.</title>
        <authorList>
            <person name="Shomura Y."/>
            <person name="Hinokuchi E."/>
            <person name="Ikeda H."/>
            <person name="Senoo A."/>
            <person name="Takahashi Y."/>
            <person name="Saito J."/>
            <person name="Komori H."/>
            <person name="Shibata N."/>
            <person name="Yonetani Y."/>
            <person name="Higuchi Y."/>
        </authorList>
    </citation>
    <scope>X-RAY CRYSTALLOGRAPHY (2.50 ANGSTROMS) IN COMPLEX WITH SUBSTRATE ANALOG; ADP AND MAGNESIUM</scope>
    <scope>FUNCTION</scope>
    <scope>CATALYTIC ACTIVITY</scope>
    <scope>BIOPHYSICOCHEMICAL PROPERTIES</scope>
    <scope>MUTAGENESIS OF TYR-75 AND SER-184</scope>
    <scope>COFACTOR</scope>
    <scope>REACTION MECHANISM</scope>
    <scope>SUBUNIT</scope>
</reference>
<reference key="8">
    <citation type="journal article" date="2014" name="Biochemistry">
        <title>Single mutation alters the substrate specificity of L-amino acid ligase.</title>
        <authorList>
            <person name="Tsuda T."/>
            <person name="Asami M."/>
            <person name="Koguchi Y."/>
            <person name="Kojima S."/>
        </authorList>
    </citation>
    <scope>X-RAY CRYSTALLOGRAPHY (1.90 ANGSTROMS) OF 4-468 OF WILD-TYPE AND MUTANT ALA-332 IN COMPLEX WITH ADP; ALANINE AND PHOSPHATE</scope>
    <scope>FUNCTION</scope>
    <scope>CATALYTIC ACTIVITY</scope>
    <scope>BIOPHYSICOCHEMICAL PROPERTIES</scope>
    <scope>MUTAGENESIS OF GLU-109; GLU-273; HIS-309; GLU-311; ARG-328 AND TRP-332</scope>
    <scope>COFACTOR</scope>
    <scope>SUBUNIT</scope>
    <scope>REACTION MECHANISM</scope>
</reference>
<evidence type="ECO:0000255" key="1">
    <source>
        <dbReference type="PROSITE-ProRule" id="PRU00409"/>
    </source>
</evidence>
<evidence type="ECO:0000269" key="2">
    <source>
    </source>
</evidence>
<evidence type="ECO:0000269" key="3">
    <source>
    </source>
</evidence>
<evidence type="ECO:0000269" key="4">
    <source>
    </source>
</evidence>
<evidence type="ECO:0000269" key="5">
    <source>
    </source>
</evidence>
<evidence type="ECO:0000269" key="6">
    <source>
    </source>
</evidence>
<evidence type="ECO:0000269" key="7">
    <source>
    </source>
</evidence>
<evidence type="ECO:0000303" key="8">
    <source>
    </source>
</evidence>
<evidence type="ECO:0000303" key="9">
    <source>
    </source>
</evidence>
<evidence type="ECO:0000303" key="10">
    <source>
    </source>
</evidence>
<evidence type="ECO:0000303" key="11">
    <source>
    </source>
</evidence>
<evidence type="ECO:0000303" key="12">
    <source>
    </source>
</evidence>
<evidence type="ECO:0000305" key="13">
    <source>
    </source>
</evidence>
<evidence type="ECO:0007829" key="14">
    <source>
        <dbReference type="PDB" id="3WNZ"/>
    </source>
</evidence>
<comment type="function">
    <text evidence="3 4 5 6 7">Part of the bacABCDEFG operon responsible for the biosynthesis of bacilysin, an irreversible inactivator of the glutaminase domain of glucosamine synthetase. Catalyzes the formation of alpha-dipeptides from various L-amino acids in the presence of ATP. In vivo catalyzes the ligation of L-alanine and L-anticapsin (epoxycyclohexanonyl-Ala) to produce the final bacilysin antibiotic (L-Ala-L-4S-cyclohexenonyl-Ala dipeptide). The substrate specificity is restricted to small amino acids such as L-Ala, for the N-terminal end of the dipeptide, whereas a wide range of hydrophobic amino acids such as L-Phe, L-Tyr and L-Met are recognized for the C-terminal end.</text>
</comment>
<comment type="catalytic activity">
    <reaction evidence="4 5 6 7">
        <text>L-anticapsin + L-alanine + ATP = bacilysin + ADP + phosphate + H(+)</text>
        <dbReference type="Rhea" id="RHEA:44332"/>
        <dbReference type="ChEBI" id="CHEBI:15378"/>
        <dbReference type="ChEBI" id="CHEBI:30616"/>
        <dbReference type="ChEBI" id="CHEBI:43474"/>
        <dbReference type="ChEBI" id="CHEBI:57972"/>
        <dbReference type="ChEBI" id="CHEBI:84310"/>
        <dbReference type="ChEBI" id="CHEBI:84311"/>
        <dbReference type="ChEBI" id="CHEBI:456216"/>
        <dbReference type="EC" id="6.3.2.49"/>
    </reaction>
</comment>
<comment type="cofactor">
    <cofactor evidence="5 7">
        <name>Mg(2+)</name>
        <dbReference type="ChEBI" id="CHEBI:18420"/>
    </cofactor>
    <text evidence="5 7">Binds 2 Mg(2+) ions per monomer.</text>
</comment>
<comment type="biophysicochemical properties">
    <kinetics>
        <KM evidence="4">0.07 mM for ATP</KM>
        <KM evidence="4">0.42 mM for L-alanine</KM>
        <KM evidence="7">1.64 mM for L-alanine</KM>
        <KM evidence="5">1.7 mM for L-alanine</KM>
        <KM evidence="7">5.23 mM for L-phenylalanine</KM>
        <KM evidence="5">20 mM for L-phenylalanine</KM>
        <KM evidence="4">105 mM for L-glutamine</KM>
        <Vmax evidence="4">0.764 umol/min/mg enzyme for Ala-Gln synthesis</Vmax>
        <text evidence="5 7">kcat is 9.32 sec(-1) for ligase activity with alanine as substrate (PubMed:24702628). kcat is 10.4 sec(-1) for ligase activity with phenylalanine as substrate (PubMed:24702628). kcat is 630 min(-1) for ligase activity with alanine and phenylalanine as substrate (PubMed:22407814).</text>
    </kinetics>
    <phDependence>
        <text evidence="4">Optimum pH is 9.5.</text>
    </phDependence>
    <temperatureDependence>
        <text evidence="4">Optimum temperature is 37 degrees Celsius.</text>
    </temperatureDependence>
</comment>
<comment type="pathway">
    <text evidence="13">Antibiotic biosynthesis; bacilysin biosynthesis.</text>
</comment>
<comment type="subunit">
    <text evidence="5 7">Monomer or homodimer.</text>
</comment>
<comment type="induction">
    <text evidence="2">The compound guanosine 5'-diphosphate 3'-diphosphate (ppGpp) is essential for the transcription of the bacABCDE operon and GTP regulates the transcription of both this operon and ywfH via the CodY-mediated regulation system.</text>
</comment>
<organism>
    <name type="scientific">Bacillus subtilis (strain 168)</name>
    <dbReference type="NCBI Taxonomy" id="224308"/>
    <lineage>
        <taxon>Bacteria</taxon>
        <taxon>Bacillati</taxon>
        <taxon>Bacillota</taxon>
        <taxon>Bacilli</taxon>
        <taxon>Bacillales</taxon>
        <taxon>Bacillaceae</taxon>
        <taxon>Bacillus</taxon>
    </lineage>
</organism>